<name>YCF4_NOSS1</name>
<protein>
    <recommendedName>
        <fullName evidence="1">Photosystem I assembly protein Ycf4</fullName>
    </recommendedName>
</protein>
<gene>
    <name evidence="1" type="primary">ycf4</name>
    <name type="ordered locus">all4289</name>
</gene>
<dbReference type="EMBL" id="BA000019">
    <property type="protein sequence ID" value="BAB75988.1"/>
    <property type="molecule type" value="Genomic_DNA"/>
</dbReference>
<dbReference type="PIR" id="AB2342">
    <property type="entry name" value="AB2342"/>
</dbReference>
<dbReference type="RefSeq" id="WP_010998427.1">
    <property type="nucleotide sequence ID" value="NZ_RSCN01000010.1"/>
</dbReference>
<dbReference type="SMR" id="Q8YPA9"/>
<dbReference type="STRING" id="103690.gene:10496338"/>
<dbReference type="KEGG" id="ana:all4289"/>
<dbReference type="eggNOG" id="ENOG502Z7YX">
    <property type="taxonomic scope" value="Bacteria"/>
</dbReference>
<dbReference type="OrthoDB" id="7059574at2"/>
<dbReference type="Proteomes" id="UP000002483">
    <property type="component" value="Chromosome"/>
</dbReference>
<dbReference type="GO" id="GO:0009522">
    <property type="term" value="C:photosystem I"/>
    <property type="evidence" value="ECO:0007669"/>
    <property type="project" value="InterPro"/>
</dbReference>
<dbReference type="GO" id="GO:0031676">
    <property type="term" value="C:plasma membrane-derived thylakoid membrane"/>
    <property type="evidence" value="ECO:0007669"/>
    <property type="project" value="UniProtKB-SubCell"/>
</dbReference>
<dbReference type="GO" id="GO:0015979">
    <property type="term" value="P:photosynthesis"/>
    <property type="evidence" value="ECO:0007669"/>
    <property type="project" value="UniProtKB-UniRule"/>
</dbReference>
<dbReference type="HAMAP" id="MF_00437">
    <property type="entry name" value="Ycf4"/>
    <property type="match status" value="1"/>
</dbReference>
<dbReference type="InterPro" id="IPR003359">
    <property type="entry name" value="PSI_Ycf4_assembly"/>
</dbReference>
<dbReference type="NCBIfam" id="NF002712">
    <property type="entry name" value="PRK02542.1"/>
    <property type="match status" value="1"/>
</dbReference>
<dbReference type="PANTHER" id="PTHR33288">
    <property type="match status" value="1"/>
</dbReference>
<dbReference type="PANTHER" id="PTHR33288:SF4">
    <property type="entry name" value="PHOTOSYSTEM I ASSEMBLY PROTEIN YCF4"/>
    <property type="match status" value="1"/>
</dbReference>
<dbReference type="Pfam" id="PF02392">
    <property type="entry name" value="Ycf4"/>
    <property type="match status" value="1"/>
</dbReference>
<evidence type="ECO:0000255" key="1">
    <source>
        <dbReference type="HAMAP-Rule" id="MF_00437"/>
    </source>
</evidence>
<evidence type="ECO:0000256" key="2">
    <source>
        <dbReference type="SAM" id="MobiDB-lite"/>
    </source>
</evidence>
<feature type="chain" id="PRO_0000217632" description="Photosystem I assembly protein Ycf4">
    <location>
        <begin position="1"/>
        <end position="198"/>
    </location>
</feature>
<feature type="transmembrane region" description="Helical" evidence="1">
    <location>
        <begin position="36"/>
        <end position="58"/>
    </location>
</feature>
<feature type="transmembrane region" description="Helical" evidence="1">
    <location>
        <begin position="78"/>
        <end position="100"/>
    </location>
</feature>
<feature type="region of interest" description="Disordered" evidence="2">
    <location>
        <begin position="1"/>
        <end position="20"/>
    </location>
</feature>
<accession>Q8YPA9</accession>
<reference key="1">
    <citation type="journal article" date="2001" name="DNA Res.">
        <title>Complete genomic sequence of the filamentous nitrogen-fixing cyanobacterium Anabaena sp. strain PCC 7120.</title>
        <authorList>
            <person name="Kaneko T."/>
            <person name="Nakamura Y."/>
            <person name="Wolk C.P."/>
            <person name="Kuritz T."/>
            <person name="Sasamoto S."/>
            <person name="Watanabe A."/>
            <person name="Iriguchi M."/>
            <person name="Ishikawa A."/>
            <person name="Kawashima K."/>
            <person name="Kimura T."/>
            <person name="Kishida Y."/>
            <person name="Kohara M."/>
            <person name="Matsumoto M."/>
            <person name="Matsuno A."/>
            <person name="Muraki A."/>
            <person name="Nakazaki N."/>
            <person name="Shimpo S."/>
            <person name="Sugimoto M."/>
            <person name="Takazawa M."/>
            <person name="Yamada M."/>
            <person name="Yasuda M."/>
            <person name="Tabata S."/>
        </authorList>
    </citation>
    <scope>NUCLEOTIDE SEQUENCE [LARGE SCALE GENOMIC DNA]</scope>
    <source>
        <strain>PCC 7120 / SAG 25.82 / UTEX 2576</strain>
    </source>
</reference>
<sequence>MTASTTINKGDSPNGDSSASSVLHQKVLGSRRFSNYWWASIVTLGASGFFLAGISSYLRVNLLIVTDPTQLIFVPQGLVMGLYGTAGLLLASYLWLVILWDLGGGYNDFNRETGNIKIFRWGFPGKNRKIEIGSRIQDIQSVRVDIKEGLNPRRALYLRVKGRRDIPLTRVGQPLSLAELETQGAQLARFLGVPLEGL</sequence>
<comment type="function">
    <text evidence="1">Seems to be required for the assembly of the photosystem I complex.</text>
</comment>
<comment type="subcellular location">
    <subcellularLocation>
        <location evidence="1">Cellular thylakoid membrane</location>
        <topology evidence="1">Multi-pass membrane protein</topology>
    </subcellularLocation>
</comment>
<comment type="similarity">
    <text evidence="1">Belongs to the Ycf4 family.</text>
</comment>
<organism>
    <name type="scientific">Nostoc sp. (strain PCC 7120 / SAG 25.82 / UTEX 2576)</name>
    <dbReference type="NCBI Taxonomy" id="103690"/>
    <lineage>
        <taxon>Bacteria</taxon>
        <taxon>Bacillati</taxon>
        <taxon>Cyanobacteriota</taxon>
        <taxon>Cyanophyceae</taxon>
        <taxon>Nostocales</taxon>
        <taxon>Nostocaceae</taxon>
        <taxon>Nostoc</taxon>
    </lineage>
</organism>
<proteinExistence type="inferred from homology"/>
<keyword id="KW-0472">Membrane</keyword>
<keyword id="KW-0602">Photosynthesis</keyword>
<keyword id="KW-1185">Reference proteome</keyword>
<keyword id="KW-0793">Thylakoid</keyword>
<keyword id="KW-0812">Transmembrane</keyword>
<keyword id="KW-1133">Transmembrane helix</keyword>